<proteinExistence type="inferred from homology"/>
<sequence length="282" mass="31442">MIYETAPAKINFTLDTLFKRNDGYHEIEMIMTTVDLNDRLTFHKRKDRKIVVEIEHNYVPSNHKNLAYRAAQLFIEQYQLKQGVTISIDKEIPVSAGLAGGSADAAATLRGLNRLFDIGASLEELALLGSKIGTDIPFCIYNKTALCTGRGEKIEFLNKPPSAWVILAKPNLGISSPDIFKLINLDKRYDVHTKMCYEALENRDYQQLCQSLSNRLEPISVSKHPQIDKLKNNMLKSGADGALMSGSGPTVYGLARKESQAKNIYNAVNGCCNEVYLVRLLG</sequence>
<accession>Q6GBZ3</accession>
<evidence type="ECO:0000255" key="1">
    <source>
        <dbReference type="HAMAP-Rule" id="MF_00061"/>
    </source>
</evidence>
<feature type="chain" id="PRO_0000189265" description="Putative 4-diphosphocytidyl-2-C-methyl-D-erythritol kinase">
    <location>
        <begin position="1"/>
        <end position="282"/>
    </location>
</feature>
<feature type="active site" evidence="1">
    <location>
        <position position="9"/>
    </location>
</feature>
<feature type="active site" evidence="1">
    <location>
        <position position="135"/>
    </location>
</feature>
<feature type="binding site" evidence="1">
    <location>
        <begin position="93"/>
        <end position="103"/>
    </location>
    <ligand>
        <name>ATP</name>
        <dbReference type="ChEBI" id="CHEBI:30616"/>
    </ligand>
</feature>
<dbReference type="EC" id="2.7.1.148" evidence="1"/>
<dbReference type="EMBL" id="BX571857">
    <property type="protein sequence ID" value="CAG42227.1"/>
    <property type="molecule type" value="Genomic_DNA"/>
</dbReference>
<dbReference type="SMR" id="Q6GBZ3"/>
<dbReference type="KEGG" id="sas:SAS0452"/>
<dbReference type="HOGENOM" id="CLU_053057_1_1_9"/>
<dbReference type="GO" id="GO:0050515">
    <property type="term" value="F:4-(cytidine 5'-diphospho)-2-C-methyl-D-erythritol kinase activity"/>
    <property type="evidence" value="ECO:0007669"/>
    <property type="project" value="UniProtKB-UniRule"/>
</dbReference>
<dbReference type="GO" id="GO:0005524">
    <property type="term" value="F:ATP binding"/>
    <property type="evidence" value="ECO:0007669"/>
    <property type="project" value="UniProtKB-UniRule"/>
</dbReference>
<dbReference type="GO" id="GO:0016114">
    <property type="term" value="P:terpenoid biosynthetic process"/>
    <property type="evidence" value="ECO:0007669"/>
    <property type="project" value="InterPro"/>
</dbReference>
<dbReference type="FunFam" id="3.30.230.10:FF:000029">
    <property type="entry name" value="4-diphosphocytidyl-2-C-methyl-D-erythritol kinase"/>
    <property type="match status" value="1"/>
</dbReference>
<dbReference type="FunFam" id="3.30.70.890:FF:000006">
    <property type="entry name" value="4-diphosphocytidyl-2-C-methyl-D-erythritol kinase"/>
    <property type="match status" value="1"/>
</dbReference>
<dbReference type="Gene3D" id="3.30.230.10">
    <property type="match status" value="1"/>
</dbReference>
<dbReference type="Gene3D" id="3.30.70.890">
    <property type="entry name" value="GHMP kinase, C-terminal domain"/>
    <property type="match status" value="1"/>
</dbReference>
<dbReference type="HAMAP" id="MF_00061">
    <property type="entry name" value="IspE"/>
    <property type="match status" value="1"/>
</dbReference>
<dbReference type="InterPro" id="IPR013750">
    <property type="entry name" value="GHMP_kinase_C_dom"/>
</dbReference>
<dbReference type="InterPro" id="IPR036554">
    <property type="entry name" value="GHMP_kinase_C_sf"/>
</dbReference>
<dbReference type="InterPro" id="IPR006204">
    <property type="entry name" value="GHMP_kinase_N_dom"/>
</dbReference>
<dbReference type="InterPro" id="IPR004424">
    <property type="entry name" value="IspE"/>
</dbReference>
<dbReference type="InterPro" id="IPR020568">
    <property type="entry name" value="Ribosomal_Su5_D2-typ_SF"/>
</dbReference>
<dbReference type="InterPro" id="IPR014721">
    <property type="entry name" value="Ribsml_uS5_D2-typ_fold_subgr"/>
</dbReference>
<dbReference type="NCBIfam" id="TIGR00154">
    <property type="entry name" value="ispE"/>
    <property type="match status" value="1"/>
</dbReference>
<dbReference type="PANTHER" id="PTHR43527">
    <property type="entry name" value="4-DIPHOSPHOCYTIDYL-2-C-METHYL-D-ERYTHRITOL KINASE, CHLOROPLASTIC"/>
    <property type="match status" value="1"/>
</dbReference>
<dbReference type="PANTHER" id="PTHR43527:SF2">
    <property type="entry name" value="4-DIPHOSPHOCYTIDYL-2-C-METHYL-D-ERYTHRITOL KINASE, CHLOROPLASTIC"/>
    <property type="match status" value="1"/>
</dbReference>
<dbReference type="Pfam" id="PF08544">
    <property type="entry name" value="GHMP_kinases_C"/>
    <property type="match status" value="1"/>
</dbReference>
<dbReference type="Pfam" id="PF00288">
    <property type="entry name" value="GHMP_kinases_N"/>
    <property type="match status" value="1"/>
</dbReference>
<dbReference type="PIRSF" id="PIRSF010376">
    <property type="entry name" value="IspE"/>
    <property type="match status" value="1"/>
</dbReference>
<dbReference type="SUPFAM" id="SSF55060">
    <property type="entry name" value="GHMP Kinase, C-terminal domain"/>
    <property type="match status" value="1"/>
</dbReference>
<dbReference type="SUPFAM" id="SSF54211">
    <property type="entry name" value="Ribosomal protein S5 domain 2-like"/>
    <property type="match status" value="1"/>
</dbReference>
<comment type="function">
    <text evidence="1">Catalyzes the phosphorylation of the position 2 hydroxy group of 4-diphosphocytidyl-2C-methyl-D-erythritol.</text>
</comment>
<comment type="catalytic activity">
    <reaction evidence="1">
        <text>4-CDP-2-C-methyl-D-erythritol + ATP = 4-CDP-2-C-methyl-D-erythritol 2-phosphate + ADP + H(+)</text>
        <dbReference type="Rhea" id="RHEA:18437"/>
        <dbReference type="ChEBI" id="CHEBI:15378"/>
        <dbReference type="ChEBI" id="CHEBI:30616"/>
        <dbReference type="ChEBI" id="CHEBI:57823"/>
        <dbReference type="ChEBI" id="CHEBI:57919"/>
        <dbReference type="ChEBI" id="CHEBI:456216"/>
        <dbReference type="EC" id="2.7.1.148"/>
    </reaction>
</comment>
<comment type="similarity">
    <text evidence="1">Belongs to the GHMP kinase family. IspE subfamily.</text>
</comment>
<name>ISPE_STAAS</name>
<protein>
    <recommendedName>
        <fullName evidence="1">Putative 4-diphosphocytidyl-2-C-methyl-D-erythritol kinase</fullName>
        <shortName evidence="1">CMK</shortName>
        <ecNumber evidence="1">2.7.1.148</ecNumber>
    </recommendedName>
    <alternativeName>
        <fullName evidence="1">4-(cytidine-5'-diphospho)-2-C-methyl-D-erythritol kinase</fullName>
    </alternativeName>
</protein>
<reference key="1">
    <citation type="journal article" date="2004" name="Proc. Natl. Acad. Sci. U.S.A.">
        <title>Complete genomes of two clinical Staphylococcus aureus strains: evidence for the rapid evolution of virulence and drug resistance.</title>
        <authorList>
            <person name="Holden M.T.G."/>
            <person name="Feil E.J."/>
            <person name="Lindsay J.A."/>
            <person name="Peacock S.J."/>
            <person name="Day N.P.J."/>
            <person name="Enright M.C."/>
            <person name="Foster T.J."/>
            <person name="Moore C.E."/>
            <person name="Hurst L."/>
            <person name="Atkin R."/>
            <person name="Barron A."/>
            <person name="Bason N."/>
            <person name="Bentley S.D."/>
            <person name="Chillingworth C."/>
            <person name="Chillingworth T."/>
            <person name="Churcher C."/>
            <person name="Clark L."/>
            <person name="Corton C."/>
            <person name="Cronin A."/>
            <person name="Doggett J."/>
            <person name="Dowd L."/>
            <person name="Feltwell T."/>
            <person name="Hance Z."/>
            <person name="Harris B."/>
            <person name="Hauser H."/>
            <person name="Holroyd S."/>
            <person name="Jagels K."/>
            <person name="James K.D."/>
            <person name="Lennard N."/>
            <person name="Line A."/>
            <person name="Mayes R."/>
            <person name="Moule S."/>
            <person name="Mungall K."/>
            <person name="Ormond D."/>
            <person name="Quail M.A."/>
            <person name="Rabbinowitsch E."/>
            <person name="Rutherford K.M."/>
            <person name="Sanders M."/>
            <person name="Sharp S."/>
            <person name="Simmonds M."/>
            <person name="Stevens K."/>
            <person name="Whitehead S."/>
            <person name="Barrell B.G."/>
            <person name="Spratt B.G."/>
            <person name="Parkhill J."/>
        </authorList>
    </citation>
    <scope>NUCLEOTIDE SEQUENCE [LARGE SCALE GENOMIC DNA]</scope>
    <source>
        <strain>MSSA476</strain>
    </source>
</reference>
<gene>
    <name type="ordered locus">SAS0452</name>
</gene>
<keyword id="KW-0067">ATP-binding</keyword>
<keyword id="KW-0418">Kinase</keyword>
<keyword id="KW-0547">Nucleotide-binding</keyword>
<keyword id="KW-0808">Transferase</keyword>
<organism>
    <name type="scientific">Staphylococcus aureus (strain MSSA476)</name>
    <dbReference type="NCBI Taxonomy" id="282459"/>
    <lineage>
        <taxon>Bacteria</taxon>
        <taxon>Bacillati</taxon>
        <taxon>Bacillota</taxon>
        <taxon>Bacilli</taxon>
        <taxon>Bacillales</taxon>
        <taxon>Staphylococcaceae</taxon>
        <taxon>Staphylococcus</taxon>
    </lineage>
</organism>